<feature type="chain" id="PRO_1000118177" description="Phosphoserine aminotransferase">
    <location>
        <begin position="1"/>
        <end position="359"/>
    </location>
</feature>
<feature type="binding site" evidence="1">
    <location>
        <position position="41"/>
    </location>
    <ligand>
        <name>L-glutamate</name>
        <dbReference type="ChEBI" id="CHEBI:29985"/>
    </ligand>
</feature>
<feature type="binding site" evidence="1">
    <location>
        <begin position="75"/>
        <end position="76"/>
    </location>
    <ligand>
        <name>pyridoxal 5'-phosphate</name>
        <dbReference type="ChEBI" id="CHEBI:597326"/>
    </ligand>
</feature>
<feature type="binding site" evidence="1">
    <location>
        <position position="101"/>
    </location>
    <ligand>
        <name>pyridoxal 5'-phosphate</name>
        <dbReference type="ChEBI" id="CHEBI:597326"/>
    </ligand>
</feature>
<feature type="binding site" evidence="1">
    <location>
        <position position="152"/>
    </location>
    <ligand>
        <name>pyridoxal 5'-phosphate</name>
        <dbReference type="ChEBI" id="CHEBI:597326"/>
    </ligand>
</feature>
<feature type="binding site" evidence="1">
    <location>
        <position position="171"/>
    </location>
    <ligand>
        <name>pyridoxal 5'-phosphate</name>
        <dbReference type="ChEBI" id="CHEBI:597326"/>
    </ligand>
</feature>
<feature type="binding site" evidence="1">
    <location>
        <position position="194"/>
    </location>
    <ligand>
        <name>pyridoxal 5'-phosphate</name>
        <dbReference type="ChEBI" id="CHEBI:597326"/>
    </ligand>
</feature>
<feature type="binding site" evidence="1">
    <location>
        <begin position="236"/>
        <end position="237"/>
    </location>
    <ligand>
        <name>pyridoxal 5'-phosphate</name>
        <dbReference type="ChEBI" id="CHEBI:597326"/>
    </ligand>
</feature>
<feature type="modified residue" description="N6-(pyridoxal phosphate)lysine" evidence="1">
    <location>
        <position position="195"/>
    </location>
</feature>
<reference key="1">
    <citation type="journal article" date="2008" name="J. Bacteriol.">
        <title>Comparative genome sequence analysis of multidrug-resistant Acinetobacter baumannii.</title>
        <authorList>
            <person name="Adams M.D."/>
            <person name="Goglin K."/>
            <person name="Molyneaux N."/>
            <person name="Hujer K.M."/>
            <person name="Lavender H."/>
            <person name="Jamison J.J."/>
            <person name="MacDonald I.J."/>
            <person name="Martin K.M."/>
            <person name="Russo T."/>
            <person name="Campagnari A.A."/>
            <person name="Hujer A.M."/>
            <person name="Bonomo R.A."/>
            <person name="Gill S.R."/>
        </authorList>
    </citation>
    <scope>NUCLEOTIDE SEQUENCE [LARGE SCALE GENOMIC DNA]</scope>
    <source>
        <strain>AB0057</strain>
    </source>
</reference>
<name>SERC_ACIB5</name>
<evidence type="ECO:0000255" key="1">
    <source>
        <dbReference type="HAMAP-Rule" id="MF_00160"/>
    </source>
</evidence>
<dbReference type="EC" id="2.6.1.52" evidence="1"/>
<dbReference type="EMBL" id="CP001182">
    <property type="protein sequence ID" value="ACJ42363.1"/>
    <property type="molecule type" value="Genomic_DNA"/>
</dbReference>
<dbReference type="RefSeq" id="WP_001203181.1">
    <property type="nucleotide sequence ID" value="NC_011586.2"/>
</dbReference>
<dbReference type="SMR" id="B7I5D6"/>
<dbReference type="GeneID" id="92894890"/>
<dbReference type="KEGG" id="abn:AB57_3027"/>
<dbReference type="HOGENOM" id="CLU_034866_0_2_6"/>
<dbReference type="UniPathway" id="UPA00135">
    <property type="reaction ID" value="UER00197"/>
</dbReference>
<dbReference type="UniPathway" id="UPA00244">
    <property type="reaction ID" value="UER00311"/>
</dbReference>
<dbReference type="Proteomes" id="UP000007094">
    <property type="component" value="Chromosome"/>
</dbReference>
<dbReference type="GO" id="GO:0005737">
    <property type="term" value="C:cytoplasm"/>
    <property type="evidence" value="ECO:0007669"/>
    <property type="project" value="UniProtKB-SubCell"/>
</dbReference>
<dbReference type="GO" id="GO:0004648">
    <property type="term" value="F:O-phospho-L-serine:2-oxoglutarate aminotransferase activity"/>
    <property type="evidence" value="ECO:0007669"/>
    <property type="project" value="UniProtKB-UniRule"/>
</dbReference>
<dbReference type="GO" id="GO:0030170">
    <property type="term" value="F:pyridoxal phosphate binding"/>
    <property type="evidence" value="ECO:0007669"/>
    <property type="project" value="UniProtKB-UniRule"/>
</dbReference>
<dbReference type="GO" id="GO:0006564">
    <property type="term" value="P:L-serine biosynthetic process"/>
    <property type="evidence" value="ECO:0007669"/>
    <property type="project" value="UniProtKB-UniRule"/>
</dbReference>
<dbReference type="GO" id="GO:0008615">
    <property type="term" value="P:pyridoxine biosynthetic process"/>
    <property type="evidence" value="ECO:0007669"/>
    <property type="project" value="UniProtKB-UniRule"/>
</dbReference>
<dbReference type="CDD" id="cd00611">
    <property type="entry name" value="PSAT_like"/>
    <property type="match status" value="1"/>
</dbReference>
<dbReference type="FunFam" id="3.40.640.10:FF:000010">
    <property type="entry name" value="Phosphoserine aminotransferase"/>
    <property type="match status" value="1"/>
</dbReference>
<dbReference type="FunFam" id="3.90.1150.10:FF:000006">
    <property type="entry name" value="Phosphoserine aminotransferase"/>
    <property type="match status" value="1"/>
</dbReference>
<dbReference type="Gene3D" id="3.90.1150.10">
    <property type="entry name" value="Aspartate Aminotransferase, domain 1"/>
    <property type="match status" value="1"/>
</dbReference>
<dbReference type="Gene3D" id="3.40.640.10">
    <property type="entry name" value="Type I PLP-dependent aspartate aminotransferase-like (Major domain)"/>
    <property type="match status" value="1"/>
</dbReference>
<dbReference type="HAMAP" id="MF_00160">
    <property type="entry name" value="SerC_aminotrans_5"/>
    <property type="match status" value="1"/>
</dbReference>
<dbReference type="InterPro" id="IPR000192">
    <property type="entry name" value="Aminotrans_V_dom"/>
</dbReference>
<dbReference type="InterPro" id="IPR020578">
    <property type="entry name" value="Aminotrans_V_PyrdxlP_BS"/>
</dbReference>
<dbReference type="InterPro" id="IPR022278">
    <property type="entry name" value="Pser_aminoTfrase"/>
</dbReference>
<dbReference type="InterPro" id="IPR015424">
    <property type="entry name" value="PyrdxlP-dep_Trfase"/>
</dbReference>
<dbReference type="InterPro" id="IPR015421">
    <property type="entry name" value="PyrdxlP-dep_Trfase_major"/>
</dbReference>
<dbReference type="InterPro" id="IPR015422">
    <property type="entry name" value="PyrdxlP-dep_Trfase_small"/>
</dbReference>
<dbReference type="NCBIfam" id="NF003764">
    <property type="entry name" value="PRK05355.1"/>
    <property type="match status" value="1"/>
</dbReference>
<dbReference type="NCBIfam" id="TIGR01364">
    <property type="entry name" value="serC_1"/>
    <property type="match status" value="1"/>
</dbReference>
<dbReference type="PANTHER" id="PTHR43247">
    <property type="entry name" value="PHOSPHOSERINE AMINOTRANSFERASE"/>
    <property type="match status" value="1"/>
</dbReference>
<dbReference type="PANTHER" id="PTHR43247:SF1">
    <property type="entry name" value="PHOSPHOSERINE AMINOTRANSFERASE"/>
    <property type="match status" value="1"/>
</dbReference>
<dbReference type="Pfam" id="PF00266">
    <property type="entry name" value="Aminotran_5"/>
    <property type="match status" value="1"/>
</dbReference>
<dbReference type="PIRSF" id="PIRSF000525">
    <property type="entry name" value="SerC"/>
    <property type="match status" value="1"/>
</dbReference>
<dbReference type="SUPFAM" id="SSF53383">
    <property type="entry name" value="PLP-dependent transferases"/>
    <property type="match status" value="1"/>
</dbReference>
<dbReference type="PROSITE" id="PS00595">
    <property type="entry name" value="AA_TRANSFER_CLASS_5"/>
    <property type="match status" value="1"/>
</dbReference>
<protein>
    <recommendedName>
        <fullName evidence="1">Phosphoserine aminotransferase</fullName>
        <ecNumber evidence="1">2.6.1.52</ecNumber>
    </recommendedName>
    <alternativeName>
        <fullName evidence="1">Phosphohydroxythreonine aminotransferase</fullName>
        <shortName evidence="1">PSAT</shortName>
    </alternativeName>
</protein>
<accession>B7I5D6</accession>
<proteinExistence type="inferred from homology"/>
<gene>
    <name evidence="1" type="primary">serC</name>
    <name type="ordered locus">AB57_3027</name>
</gene>
<comment type="function">
    <text evidence="1">Catalyzes the reversible conversion of 3-phosphohydroxypyruvate to phosphoserine and of 3-hydroxy-2-oxo-4-phosphonooxybutanoate to phosphohydroxythreonine.</text>
</comment>
<comment type="catalytic activity">
    <reaction evidence="1">
        <text>O-phospho-L-serine + 2-oxoglutarate = 3-phosphooxypyruvate + L-glutamate</text>
        <dbReference type="Rhea" id="RHEA:14329"/>
        <dbReference type="ChEBI" id="CHEBI:16810"/>
        <dbReference type="ChEBI" id="CHEBI:18110"/>
        <dbReference type="ChEBI" id="CHEBI:29985"/>
        <dbReference type="ChEBI" id="CHEBI:57524"/>
        <dbReference type="EC" id="2.6.1.52"/>
    </reaction>
</comment>
<comment type="catalytic activity">
    <reaction evidence="1">
        <text>4-(phosphooxy)-L-threonine + 2-oxoglutarate = (R)-3-hydroxy-2-oxo-4-phosphooxybutanoate + L-glutamate</text>
        <dbReference type="Rhea" id="RHEA:16573"/>
        <dbReference type="ChEBI" id="CHEBI:16810"/>
        <dbReference type="ChEBI" id="CHEBI:29985"/>
        <dbReference type="ChEBI" id="CHEBI:58452"/>
        <dbReference type="ChEBI" id="CHEBI:58538"/>
        <dbReference type="EC" id="2.6.1.52"/>
    </reaction>
</comment>
<comment type="cofactor">
    <cofactor evidence="1">
        <name>pyridoxal 5'-phosphate</name>
        <dbReference type="ChEBI" id="CHEBI:597326"/>
    </cofactor>
    <text evidence="1">Binds 1 pyridoxal phosphate per subunit.</text>
</comment>
<comment type="pathway">
    <text evidence="1">Amino-acid biosynthesis; L-serine biosynthesis; L-serine from 3-phospho-D-glycerate: step 2/3.</text>
</comment>
<comment type="pathway">
    <text evidence="1">Cofactor biosynthesis; pyridoxine 5'-phosphate biosynthesis; pyridoxine 5'-phosphate from D-erythrose 4-phosphate: step 3/5.</text>
</comment>
<comment type="subunit">
    <text evidence="1">Homodimer.</text>
</comment>
<comment type="subcellular location">
    <subcellularLocation>
        <location evidence="1">Cytoplasm</location>
    </subcellularLocation>
</comment>
<comment type="similarity">
    <text evidence="1">Belongs to the class-V pyridoxal-phosphate-dependent aminotransferase family. SerC subfamily.</text>
</comment>
<keyword id="KW-0028">Amino-acid biosynthesis</keyword>
<keyword id="KW-0032">Aminotransferase</keyword>
<keyword id="KW-0963">Cytoplasm</keyword>
<keyword id="KW-0663">Pyridoxal phosphate</keyword>
<keyword id="KW-0664">Pyridoxine biosynthesis</keyword>
<keyword id="KW-0718">Serine biosynthesis</keyword>
<keyword id="KW-0808">Transferase</keyword>
<sequence>MRAYNFCAGPAALPTAVLEKAQQELLDWQGKGLSIMEMSHRSADYVAVAEKAEADLRKLMNIPENYKVLFLQGGASLQFSAIPLNLLGKNNKADYIHTGIWSEKALKEAKRYGDINVVEAGIKVDGKFAISEQSEWNLSDDAAYVHYADNETIGGLQFAGVPDVKAPLVCDFSSSILSAPLDVSKFGLIYAGAQKNIGPAGLTIVIIRDDLLDQAKAEIPSILKYADQAKNGSMVNTPSTYAWYLSGLVFEWLLEQGGVDAIHKVNLEKAQLLYGYIDSSDFYNNPIAIPNRSIMNVPFTLADEALEKQFLKEAEANHLLNLAGHRSVGGMRASIYNAVPLEGVQALIRFMDDFAKRNG</sequence>
<organism>
    <name type="scientific">Acinetobacter baumannii (strain AB0057)</name>
    <dbReference type="NCBI Taxonomy" id="480119"/>
    <lineage>
        <taxon>Bacteria</taxon>
        <taxon>Pseudomonadati</taxon>
        <taxon>Pseudomonadota</taxon>
        <taxon>Gammaproteobacteria</taxon>
        <taxon>Moraxellales</taxon>
        <taxon>Moraxellaceae</taxon>
        <taxon>Acinetobacter</taxon>
        <taxon>Acinetobacter calcoaceticus/baumannii complex</taxon>
    </lineage>
</organism>